<dbReference type="EMBL" id="CP001600">
    <property type="protein sequence ID" value="ACR69653.1"/>
    <property type="molecule type" value="Genomic_DNA"/>
</dbReference>
<dbReference type="RefSeq" id="WP_015871767.1">
    <property type="nucleotide sequence ID" value="NZ_CP169062.1"/>
</dbReference>
<dbReference type="SMR" id="C5BE92"/>
<dbReference type="STRING" id="67780.B6E78_04540"/>
<dbReference type="GeneID" id="69539398"/>
<dbReference type="KEGG" id="eic:NT01EI_2483"/>
<dbReference type="PATRIC" id="fig|634503.3.peg.2206"/>
<dbReference type="HOGENOM" id="CLU_087560_1_1_6"/>
<dbReference type="OrthoDB" id="9787361at2"/>
<dbReference type="Proteomes" id="UP000001485">
    <property type="component" value="Chromosome"/>
</dbReference>
<dbReference type="GO" id="GO:0030288">
    <property type="term" value="C:outer membrane-bounded periplasmic space"/>
    <property type="evidence" value="ECO:0007669"/>
    <property type="project" value="TreeGrafter"/>
</dbReference>
<dbReference type="GO" id="GO:0044874">
    <property type="term" value="P:lipoprotein localization to outer membrane"/>
    <property type="evidence" value="ECO:0007669"/>
    <property type="project" value="UniProtKB-UniRule"/>
</dbReference>
<dbReference type="GO" id="GO:0042953">
    <property type="term" value="P:lipoprotein transport"/>
    <property type="evidence" value="ECO:0007669"/>
    <property type="project" value="InterPro"/>
</dbReference>
<dbReference type="CDD" id="cd16325">
    <property type="entry name" value="LolA"/>
    <property type="match status" value="1"/>
</dbReference>
<dbReference type="FunFam" id="2.50.20.10:FF:000001">
    <property type="entry name" value="Outer-membrane lipoprotein carrier protein"/>
    <property type="match status" value="1"/>
</dbReference>
<dbReference type="Gene3D" id="2.50.20.10">
    <property type="entry name" value="Lipoprotein localisation LolA/LolB/LppX"/>
    <property type="match status" value="1"/>
</dbReference>
<dbReference type="HAMAP" id="MF_00240">
    <property type="entry name" value="LolA"/>
    <property type="match status" value="1"/>
</dbReference>
<dbReference type="InterPro" id="IPR029046">
    <property type="entry name" value="LolA/LolB/LppX"/>
</dbReference>
<dbReference type="InterPro" id="IPR004564">
    <property type="entry name" value="OM_lipoprot_carrier_LolA-like"/>
</dbReference>
<dbReference type="InterPro" id="IPR018323">
    <property type="entry name" value="OM_lipoprot_carrier_LolA_Pbac"/>
</dbReference>
<dbReference type="NCBIfam" id="TIGR00547">
    <property type="entry name" value="lolA"/>
    <property type="match status" value="1"/>
</dbReference>
<dbReference type="PANTHER" id="PTHR35869">
    <property type="entry name" value="OUTER-MEMBRANE LIPOPROTEIN CARRIER PROTEIN"/>
    <property type="match status" value="1"/>
</dbReference>
<dbReference type="PANTHER" id="PTHR35869:SF1">
    <property type="entry name" value="OUTER-MEMBRANE LIPOPROTEIN CARRIER PROTEIN"/>
    <property type="match status" value="1"/>
</dbReference>
<dbReference type="Pfam" id="PF03548">
    <property type="entry name" value="LolA"/>
    <property type="match status" value="1"/>
</dbReference>
<dbReference type="SUPFAM" id="SSF89392">
    <property type="entry name" value="Prokaryotic lipoproteins and lipoprotein localization factors"/>
    <property type="match status" value="1"/>
</dbReference>
<proteinExistence type="inferred from homology"/>
<sequence>MKKLLVACCVVSGMMSASVLASPSSDLQGRLNKVNSFHASFTQTVSTADGTPVQQGEGELWVKRPNLFNWHMISPDESVLVSDGKTLWFYNPFVEQVTATWLNRATGNTPFMLITRNDASDWAQYNVTQQGNTFDLVPKSAKNNLKKFTISVMPDGTINGFSAVEQDGQRSVYTLKRQQNGAVDAAKFRFTPPPGVTLDDQRQQ</sequence>
<feature type="signal peptide" evidence="1">
    <location>
        <begin position="1"/>
        <end position="21"/>
    </location>
</feature>
<feature type="chain" id="PRO_1000204468" description="Outer-membrane lipoprotein carrier protein">
    <location>
        <begin position="22"/>
        <end position="204"/>
    </location>
</feature>
<evidence type="ECO:0000255" key="1">
    <source>
        <dbReference type="HAMAP-Rule" id="MF_00240"/>
    </source>
</evidence>
<comment type="function">
    <text evidence="1">Participates in the translocation of lipoproteins from the inner membrane to the outer membrane. Only forms a complex with a lipoprotein if the residue after the N-terminal Cys is not an aspartate (The Asp acts as a targeting signal to indicate that the lipoprotein should stay in the inner membrane).</text>
</comment>
<comment type="subunit">
    <text evidence="1">Monomer.</text>
</comment>
<comment type="subcellular location">
    <subcellularLocation>
        <location evidence="1">Periplasm</location>
    </subcellularLocation>
</comment>
<comment type="similarity">
    <text evidence="1">Belongs to the LolA family.</text>
</comment>
<name>LOLA_EDWI9</name>
<accession>C5BE92</accession>
<reference key="1">
    <citation type="submission" date="2009-03" db="EMBL/GenBank/DDBJ databases">
        <title>Complete genome sequence of Edwardsiella ictaluri 93-146.</title>
        <authorList>
            <person name="Williams M.L."/>
            <person name="Gillaspy A.F."/>
            <person name="Dyer D.W."/>
            <person name="Thune R.L."/>
            <person name="Waldbieser G.C."/>
            <person name="Schuster S.C."/>
            <person name="Gipson J."/>
            <person name="Zaitshik J."/>
            <person name="Landry C."/>
            <person name="Lawrence M.L."/>
        </authorList>
    </citation>
    <scope>NUCLEOTIDE SEQUENCE [LARGE SCALE GENOMIC DNA]</scope>
    <source>
        <strain>93-146</strain>
    </source>
</reference>
<gene>
    <name evidence="1" type="primary">lolA</name>
    <name type="ordered locus">NT01EI_2483</name>
</gene>
<protein>
    <recommendedName>
        <fullName evidence="1">Outer-membrane lipoprotein carrier protein</fullName>
    </recommendedName>
</protein>
<organism>
    <name type="scientific">Edwardsiella ictaluri (strain 93-146)</name>
    <dbReference type="NCBI Taxonomy" id="634503"/>
    <lineage>
        <taxon>Bacteria</taxon>
        <taxon>Pseudomonadati</taxon>
        <taxon>Pseudomonadota</taxon>
        <taxon>Gammaproteobacteria</taxon>
        <taxon>Enterobacterales</taxon>
        <taxon>Hafniaceae</taxon>
        <taxon>Edwardsiella</taxon>
    </lineage>
</organism>
<keyword id="KW-0143">Chaperone</keyword>
<keyword id="KW-0574">Periplasm</keyword>
<keyword id="KW-0653">Protein transport</keyword>
<keyword id="KW-0732">Signal</keyword>
<keyword id="KW-0813">Transport</keyword>